<feature type="chain" id="PRO_0000144544" description="ATP synthase subunit beta, chloroplastic">
    <location>
        <begin position="1"/>
        <end position="495"/>
    </location>
</feature>
<feature type="binding site" evidence="1">
    <location>
        <begin position="172"/>
        <end position="179"/>
    </location>
    <ligand>
        <name>ATP</name>
        <dbReference type="ChEBI" id="CHEBI:30616"/>
    </ligand>
</feature>
<sequence>MVTKTSFLSFEISELVKKNVGYITQIIGPVLDVASSPGKMPNIYNSLIIKGQNPAGQEINVTCEVQQLLGNNEVRAVAMSATDGLTRGMGAVDTGAPLSVPVGETTLGRISNVLGEPVDNLGPVQSSTTFPIHRSAPAFIQLDTKLSIFETGIKVVDLLAPYRRGGKIGLFGGAGVGKTVLIMELINNIAKAHGGVSVSGGVGERTREGNDPYMEMKESKVINEENISESKVALVYGQMNEPPGARMRVGSTASTMAEYFRDVNKQDVLPFIDNILRFVQAGSEVSALLGRMPSAVGYQPTLGTEMGSSQERITSTKDGSITSIQAVYVPADDLTDPAPATTSAHLDATTVLSRGLAAKGIYPAVDPLDSTSTMSQPWIVGEEHYETAQGVKQTSQRYKELQDIIAILGLDELSEEDRQTVARARKIERFSSQPSFVAEVFTGSPGKYVSLSETIKGFQMILPGELDNLPEQAFYLVGNIDEATAKAAALQVEGQ</sequence>
<proteinExistence type="inferred from homology"/>
<evidence type="ECO:0000255" key="1">
    <source>
        <dbReference type="HAMAP-Rule" id="MF_01347"/>
    </source>
</evidence>
<gene>
    <name evidence="1" type="primary">atpB</name>
</gene>
<reference key="1">
    <citation type="submission" date="2001-06" db="EMBL/GenBank/DDBJ databases">
        <authorList>
            <person name="Wolf P.G."/>
            <person name="Su P.-H."/>
        </authorList>
    </citation>
    <scope>NUCLEOTIDE SEQUENCE [GENOMIC DNA]</scope>
    <scope>SEQUENCE REVISION</scope>
</reference>
<reference key="2">
    <citation type="journal article" date="1997" name="Am. J. Bot.">
        <title>Evaluation of atpB nucleotide sequences for phylogenetic studies of ferns and other pteridophytes.</title>
        <authorList>
            <person name="Wolf P.G."/>
        </authorList>
    </citation>
    <scope>NUCLEOTIDE SEQUENCE [GENOMIC DNA] OF 1-473</scope>
    <source>
        <tissue>Frond</tissue>
    </source>
</reference>
<dbReference type="EC" id="7.1.2.2" evidence="1"/>
<dbReference type="EMBL" id="U93835">
    <property type="protein sequence ID" value="AAB51743.3"/>
    <property type="molecule type" value="Genomic_DNA"/>
</dbReference>
<dbReference type="SMR" id="O03079"/>
<dbReference type="GO" id="GO:0009535">
    <property type="term" value="C:chloroplast thylakoid membrane"/>
    <property type="evidence" value="ECO:0007669"/>
    <property type="project" value="UniProtKB-SubCell"/>
</dbReference>
<dbReference type="GO" id="GO:0005739">
    <property type="term" value="C:mitochondrion"/>
    <property type="evidence" value="ECO:0007669"/>
    <property type="project" value="GOC"/>
</dbReference>
<dbReference type="GO" id="GO:0045259">
    <property type="term" value="C:proton-transporting ATP synthase complex"/>
    <property type="evidence" value="ECO:0007669"/>
    <property type="project" value="UniProtKB-KW"/>
</dbReference>
<dbReference type="GO" id="GO:0005524">
    <property type="term" value="F:ATP binding"/>
    <property type="evidence" value="ECO:0007669"/>
    <property type="project" value="UniProtKB-UniRule"/>
</dbReference>
<dbReference type="GO" id="GO:0016887">
    <property type="term" value="F:ATP hydrolysis activity"/>
    <property type="evidence" value="ECO:0007669"/>
    <property type="project" value="InterPro"/>
</dbReference>
<dbReference type="GO" id="GO:0046933">
    <property type="term" value="F:proton-transporting ATP synthase activity, rotational mechanism"/>
    <property type="evidence" value="ECO:0007669"/>
    <property type="project" value="UniProtKB-UniRule"/>
</dbReference>
<dbReference type="GO" id="GO:0042776">
    <property type="term" value="P:proton motive force-driven mitochondrial ATP synthesis"/>
    <property type="evidence" value="ECO:0007669"/>
    <property type="project" value="TreeGrafter"/>
</dbReference>
<dbReference type="CDD" id="cd18110">
    <property type="entry name" value="ATP-synt_F1_beta_C"/>
    <property type="match status" value="1"/>
</dbReference>
<dbReference type="CDD" id="cd18115">
    <property type="entry name" value="ATP-synt_F1_beta_N"/>
    <property type="match status" value="1"/>
</dbReference>
<dbReference type="CDD" id="cd01133">
    <property type="entry name" value="F1-ATPase_beta_CD"/>
    <property type="match status" value="1"/>
</dbReference>
<dbReference type="FunFam" id="1.10.1140.10:FF:000001">
    <property type="entry name" value="ATP synthase subunit beta"/>
    <property type="match status" value="1"/>
</dbReference>
<dbReference type="FunFam" id="3.40.50.12240:FF:000006">
    <property type="entry name" value="ATP synthase subunit beta"/>
    <property type="match status" value="1"/>
</dbReference>
<dbReference type="FunFam" id="3.40.50.300:FF:000026">
    <property type="entry name" value="ATP synthase subunit beta"/>
    <property type="match status" value="1"/>
</dbReference>
<dbReference type="FunFam" id="2.40.10.170:FF:000002">
    <property type="entry name" value="ATP synthase subunit beta, chloroplastic"/>
    <property type="match status" value="1"/>
</dbReference>
<dbReference type="Gene3D" id="2.40.10.170">
    <property type="match status" value="1"/>
</dbReference>
<dbReference type="Gene3D" id="1.10.1140.10">
    <property type="entry name" value="Bovine Mitochondrial F1-atpase, Atp Synthase Beta Chain, Chain D, domain 3"/>
    <property type="match status" value="1"/>
</dbReference>
<dbReference type="Gene3D" id="3.40.50.300">
    <property type="entry name" value="P-loop containing nucleotide triphosphate hydrolases"/>
    <property type="match status" value="1"/>
</dbReference>
<dbReference type="HAMAP" id="MF_01347">
    <property type="entry name" value="ATP_synth_beta_bact"/>
    <property type="match status" value="1"/>
</dbReference>
<dbReference type="InterPro" id="IPR003593">
    <property type="entry name" value="AAA+_ATPase"/>
</dbReference>
<dbReference type="InterPro" id="IPR055190">
    <property type="entry name" value="ATP-synt_VA_C"/>
</dbReference>
<dbReference type="InterPro" id="IPR005722">
    <property type="entry name" value="ATP_synth_F1_bsu"/>
</dbReference>
<dbReference type="InterPro" id="IPR020003">
    <property type="entry name" value="ATPase_a/bsu_AS"/>
</dbReference>
<dbReference type="InterPro" id="IPR050053">
    <property type="entry name" value="ATPase_alpha/beta_chains"/>
</dbReference>
<dbReference type="InterPro" id="IPR004100">
    <property type="entry name" value="ATPase_F1/V1/A1_a/bsu_N"/>
</dbReference>
<dbReference type="InterPro" id="IPR036121">
    <property type="entry name" value="ATPase_F1/V1/A1_a/bsu_N_sf"/>
</dbReference>
<dbReference type="InterPro" id="IPR000194">
    <property type="entry name" value="ATPase_F1/V1/A1_a/bsu_nucl-bd"/>
</dbReference>
<dbReference type="InterPro" id="IPR024034">
    <property type="entry name" value="ATPase_F1/V1_b/a_C"/>
</dbReference>
<dbReference type="InterPro" id="IPR027417">
    <property type="entry name" value="P-loop_NTPase"/>
</dbReference>
<dbReference type="NCBIfam" id="TIGR01039">
    <property type="entry name" value="atpD"/>
    <property type="match status" value="1"/>
</dbReference>
<dbReference type="PANTHER" id="PTHR15184">
    <property type="entry name" value="ATP SYNTHASE"/>
    <property type="match status" value="1"/>
</dbReference>
<dbReference type="PANTHER" id="PTHR15184:SF71">
    <property type="entry name" value="ATP SYNTHASE SUBUNIT BETA, MITOCHONDRIAL"/>
    <property type="match status" value="1"/>
</dbReference>
<dbReference type="Pfam" id="PF00006">
    <property type="entry name" value="ATP-synt_ab"/>
    <property type="match status" value="1"/>
</dbReference>
<dbReference type="Pfam" id="PF02874">
    <property type="entry name" value="ATP-synt_ab_N"/>
    <property type="match status" value="1"/>
</dbReference>
<dbReference type="Pfam" id="PF22919">
    <property type="entry name" value="ATP-synt_VA_C"/>
    <property type="match status" value="1"/>
</dbReference>
<dbReference type="SMART" id="SM00382">
    <property type="entry name" value="AAA"/>
    <property type="match status" value="1"/>
</dbReference>
<dbReference type="SUPFAM" id="SSF47917">
    <property type="entry name" value="C-terminal domain of alpha and beta subunits of F1 ATP synthase"/>
    <property type="match status" value="1"/>
</dbReference>
<dbReference type="SUPFAM" id="SSF50615">
    <property type="entry name" value="N-terminal domain of alpha and beta subunits of F1 ATP synthase"/>
    <property type="match status" value="1"/>
</dbReference>
<dbReference type="SUPFAM" id="SSF52540">
    <property type="entry name" value="P-loop containing nucleoside triphosphate hydrolases"/>
    <property type="match status" value="1"/>
</dbReference>
<dbReference type="PROSITE" id="PS00152">
    <property type="entry name" value="ATPASE_ALPHA_BETA"/>
    <property type="match status" value="1"/>
</dbReference>
<keyword id="KW-0066">ATP synthesis</keyword>
<keyword id="KW-0067">ATP-binding</keyword>
<keyword id="KW-0139">CF(1)</keyword>
<keyword id="KW-0150">Chloroplast</keyword>
<keyword id="KW-0375">Hydrogen ion transport</keyword>
<keyword id="KW-0406">Ion transport</keyword>
<keyword id="KW-0472">Membrane</keyword>
<keyword id="KW-0547">Nucleotide-binding</keyword>
<keyword id="KW-0934">Plastid</keyword>
<keyword id="KW-0793">Thylakoid</keyword>
<keyword id="KW-1278">Translocase</keyword>
<keyword id="KW-0813">Transport</keyword>
<accession>O03079</accession>
<geneLocation type="chloroplast"/>
<protein>
    <recommendedName>
        <fullName evidence="1">ATP synthase subunit beta, chloroplastic</fullName>
        <ecNumber evidence="1">7.1.2.2</ecNumber>
    </recommendedName>
    <alternativeName>
        <fullName evidence="1">ATP synthase F1 sector subunit beta</fullName>
    </alternativeName>
    <alternativeName>
        <fullName evidence="1">F-ATPase subunit beta</fullName>
    </alternativeName>
</protein>
<comment type="function">
    <text evidence="1">Produces ATP from ADP in the presence of a proton gradient across the membrane. The catalytic sites are hosted primarily by the beta subunits.</text>
</comment>
<comment type="catalytic activity">
    <reaction evidence="1">
        <text>ATP + H2O + 4 H(+)(in) = ADP + phosphate + 5 H(+)(out)</text>
        <dbReference type="Rhea" id="RHEA:57720"/>
        <dbReference type="ChEBI" id="CHEBI:15377"/>
        <dbReference type="ChEBI" id="CHEBI:15378"/>
        <dbReference type="ChEBI" id="CHEBI:30616"/>
        <dbReference type="ChEBI" id="CHEBI:43474"/>
        <dbReference type="ChEBI" id="CHEBI:456216"/>
        <dbReference type="EC" id="7.1.2.2"/>
    </reaction>
</comment>
<comment type="subunit">
    <text evidence="1">F-type ATPases have 2 components, CF(1) - the catalytic core - and CF(0) - the membrane proton channel. CF(1) has five subunits: alpha(3), beta(3), gamma(1), delta(1), epsilon(1). CF(0) has four main subunits: a(1), b(1), b'(1) and c(9-12).</text>
</comment>
<comment type="subcellular location">
    <subcellularLocation>
        <location evidence="1">Plastid</location>
        <location evidence="1">Chloroplast thylakoid membrane</location>
        <topology evidence="1">Peripheral membrane protein</topology>
    </subcellularLocation>
</comment>
<comment type="similarity">
    <text evidence="1">Belongs to the ATPase alpha/beta chains family.</text>
</comment>
<name>ATPB_PTEAQ</name>
<organism>
    <name type="scientific">Pteridium aquilinum</name>
    <name type="common">Bracken fern</name>
    <name type="synonym">Pteris aquilina</name>
    <dbReference type="NCBI Taxonomy" id="32101"/>
    <lineage>
        <taxon>Eukaryota</taxon>
        <taxon>Viridiplantae</taxon>
        <taxon>Streptophyta</taxon>
        <taxon>Embryophyta</taxon>
        <taxon>Tracheophyta</taxon>
        <taxon>Polypodiopsida</taxon>
        <taxon>Polypodiidae</taxon>
        <taxon>Polypodiales</taxon>
        <taxon>Dennstaedtiineae</taxon>
        <taxon>Dennstaedtiaceae</taxon>
        <taxon>Pteridium</taxon>
    </lineage>
</organism>